<dbReference type="EMBL" id="CR759983">
    <property type="protein sequence ID" value="CAJ82756.1"/>
    <property type="status" value="ALT_INIT"/>
    <property type="molecule type" value="mRNA"/>
</dbReference>
<dbReference type="EMBL" id="BC088533">
    <property type="protein sequence ID" value="AAH88533.1"/>
    <property type="status" value="ALT_INIT"/>
    <property type="molecule type" value="mRNA"/>
</dbReference>
<dbReference type="RefSeq" id="NP_001011367.1">
    <property type="nucleotide sequence ID" value="NM_001011367.1"/>
</dbReference>
<dbReference type="SMR" id="Q5M7N6"/>
<dbReference type="FunCoup" id="Q5M7N6">
    <property type="interactions" value="900"/>
</dbReference>
<dbReference type="STRING" id="8364.ENSXETP00000024239"/>
<dbReference type="PaxDb" id="8364-ENSXETP00000042292"/>
<dbReference type="DNASU" id="496834"/>
<dbReference type="GeneID" id="496834"/>
<dbReference type="KEGG" id="xtr:496834"/>
<dbReference type="CTD" id="2302"/>
<dbReference type="eggNOG" id="KOG2294">
    <property type="taxonomic scope" value="Eukaryota"/>
</dbReference>
<dbReference type="InParanoid" id="Q5M7N6"/>
<dbReference type="OrthoDB" id="5954824at2759"/>
<dbReference type="Proteomes" id="UP000008143">
    <property type="component" value="Chromosome 10"/>
</dbReference>
<dbReference type="GO" id="GO:0005634">
    <property type="term" value="C:nucleus"/>
    <property type="evidence" value="ECO:0000250"/>
    <property type="project" value="UniProtKB"/>
</dbReference>
<dbReference type="GO" id="GO:0003700">
    <property type="term" value="F:DNA-binding transcription factor activity"/>
    <property type="evidence" value="ECO:0007669"/>
    <property type="project" value="InterPro"/>
</dbReference>
<dbReference type="GO" id="GO:0043565">
    <property type="term" value="F:sequence-specific DNA binding"/>
    <property type="evidence" value="ECO:0007669"/>
    <property type="project" value="InterPro"/>
</dbReference>
<dbReference type="GO" id="GO:0035082">
    <property type="term" value="P:axoneme assembly"/>
    <property type="evidence" value="ECO:0000250"/>
    <property type="project" value="UniProtKB"/>
</dbReference>
<dbReference type="GO" id="GO:0032053">
    <property type="term" value="P:ciliary basal body organization"/>
    <property type="evidence" value="ECO:0000250"/>
    <property type="project" value="UniProtKB"/>
</dbReference>
<dbReference type="GO" id="GO:0060271">
    <property type="term" value="P:cilium assembly"/>
    <property type="evidence" value="ECO:0000250"/>
    <property type="project" value="UniProtKB"/>
</dbReference>
<dbReference type="GO" id="GO:0007368">
    <property type="term" value="P:determination of left/right symmetry"/>
    <property type="evidence" value="ECO:0000250"/>
    <property type="project" value="UniProtKB"/>
</dbReference>
<dbReference type="GO" id="GO:0008104">
    <property type="term" value="P:protein localization"/>
    <property type="evidence" value="ECO:0000250"/>
    <property type="project" value="UniProtKB"/>
</dbReference>
<dbReference type="CDD" id="cd20023">
    <property type="entry name" value="FH_FOXJ1"/>
    <property type="match status" value="1"/>
</dbReference>
<dbReference type="FunFam" id="1.10.10.10:FF:000030">
    <property type="entry name" value="Forkhead box protein K2"/>
    <property type="match status" value="1"/>
</dbReference>
<dbReference type="Gene3D" id="1.10.10.10">
    <property type="entry name" value="Winged helix-like DNA-binding domain superfamily/Winged helix DNA-binding domain"/>
    <property type="match status" value="1"/>
</dbReference>
<dbReference type="InterPro" id="IPR047512">
    <property type="entry name" value="FH_FOXJ1"/>
</dbReference>
<dbReference type="InterPro" id="IPR001766">
    <property type="entry name" value="Fork_head_dom"/>
</dbReference>
<dbReference type="InterPro" id="IPR047513">
    <property type="entry name" value="FOXJ1"/>
</dbReference>
<dbReference type="InterPro" id="IPR018122">
    <property type="entry name" value="TF_fork_head_CS_1"/>
</dbReference>
<dbReference type="InterPro" id="IPR030456">
    <property type="entry name" value="TF_fork_head_CS_2"/>
</dbReference>
<dbReference type="InterPro" id="IPR036388">
    <property type="entry name" value="WH-like_DNA-bd_sf"/>
</dbReference>
<dbReference type="InterPro" id="IPR036390">
    <property type="entry name" value="WH_DNA-bd_sf"/>
</dbReference>
<dbReference type="PANTHER" id="PTHR46805">
    <property type="entry name" value="FORKHEAD BOX PROTEIN J1"/>
    <property type="match status" value="1"/>
</dbReference>
<dbReference type="PANTHER" id="PTHR46805:SF5">
    <property type="entry name" value="FORKHEAD BOX PROTEIN J1"/>
    <property type="match status" value="1"/>
</dbReference>
<dbReference type="Pfam" id="PF00250">
    <property type="entry name" value="Forkhead"/>
    <property type="match status" value="1"/>
</dbReference>
<dbReference type="PRINTS" id="PR00053">
    <property type="entry name" value="FORKHEAD"/>
</dbReference>
<dbReference type="SMART" id="SM00339">
    <property type="entry name" value="FH"/>
    <property type="match status" value="1"/>
</dbReference>
<dbReference type="SUPFAM" id="SSF46785">
    <property type="entry name" value="Winged helix' DNA-binding domain"/>
    <property type="match status" value="1"/>
</dbReference>
<dbReference type="PROSITE" id="PS00657">
    <property type="entry name" value="FORK_HEAD_1"/>
    <property type="match status" value="1"/>
</dbReference>
<dbReference type="PROSITE" id="PS00658">
    <property type="entry name" value="FORK_HEAD_2"/>
    <property type="match status" value="1"/>
</dbReference>
<dbReference type="PROSITE" id="PS50039">
    <property type="entry name" value="FORK_HEAD_3"/>
    <property type="match status" value="1"/>
</dbReference>
<keyword id="KW-0010">Activator</keyword>
<keyword id="KW-0970">Cilium biogenesis/degradation</keyword>
<keyword id="KW-0238">DNA-binding</keyword>
<keyword id="KW-0539">Nucleus</keyword>
<keyword id="KW-1185">Reference proteome</keyword>
<keyword id="KW-0804">Transcription</keyword>
<keyword id="KW-0805">Transcription regulation</keyword>
<proteinExistence type="evidence at transcript level"/>
<accession>Q5M7N6</accession>
<accession>Q28JA8</accession>
<feature type="chain" id="PRO_0000250444" description="Forkhead box protein J1">
    <location>
        <begin position="1"/>
        <end position="438"/>
    </location>
</feature>
<feature type="DNA-binding region" description="Fork-head" evidence="2 3">
    <location>
        <begin position="123"/>
        <end position="217"/>
    </location>
</feature>
<feature type="sequence conflict" description="In Ref. 1; CAJ82756." evidence="4" ref="1">
    <original>F</original>
    <variation>S</variation>
    <location>
        <position position="72"/>
    </location>
</feature>
<reference evidence="6" key="1">
    <citation type="submission" date="2006-06" db="EMBL/GenBank/DDBJ databases">
        <authorList>
            <consortium name="Sanger Xenopus tropicalis EST/cDNA project"/>
        </authorList>
    </citation>
    <scope>NUCLEOTIDE SEQUENCE [LARGE SCALE MRNA]</scope>
    <source>
        <tissue evidence="6">Neurula</tissue>
    </source>
</reference>
<reference evidence="6" key="2">
    <citation type="submission" date="2004-12" db="EMBL/GenBank/DDBJ databases">
        <authorList>
            <consortium name="NIH - Xenopus Gene Collection (XGC) project"/>
        </authorList>
    </citation>
    <scope>NUCLEOTIDE SEQUENCE [LARGE SCALE MRNA]</scope>
    <source>
        <tissue evidence="5">Tail bud</tissue>
    </source>
</reference>
<organism>
    <name type="scientific">Xenopus tropicalis</name>
    <name type="common">Western clawed frog</name>
    <name type="synonym">Silurana tropicalis</name>
    <dbReference type="NCBI Taxonomy" id="8364"/>
    <lineage>
        <taxon>Eukaryota</taxon>
        <taxon>Metazoa</taxon>
        <taxon>Chordata</taxon>
        <taxon>Craniata</taxon>
        <taxon>Vertebrata</taxon>
        <taxon>Euteleostomi</taxon>
        <taxon>Amphibia</taxon>
        <taxon>Batrachia</taxon>
        <taxon>Anura</taxon>
        <taxon>Pipoidea</taxon>
        <taxon>Pipidae</taxon>
        <taxon>Xenopodinae</taxon>
        <taxon>Xenopus</taxon>
        <taxon>Silurana</taxon>
    </lineage>
</organism>
<evidence type="ECO:0000250" key="1">
    <source>
        <dbReference type="UniProtKB" id="Q708W2"/>
    </source>
</evidence>
<evidence type="ECO:0000255" key="2"/>
<evidence type="ECO:0000255" key="3">
    <source>
        <dbReference type="PROSITE-ProRule" id="PRU00089"/>
    </source>
</evidence>
<evidence type="ECO:0000305" key="4"/>
<evidence type="ECO:0000312" key="5">
    <source>
        <dbReference type="EMBL" id="AAH88533.1"/>
    </source>
</evidence>
<evidence type="ECO:0000312" key="6">
    <source>
        <dbReference type="EMBL" id="CAJ82756.1"/>
    </source>
</evidence>
<gene>
    <name evidence="5" type="primary">foxj1</name>
    <name type="ORF">TNeu102g20.1</name>
</gene>
<sequence length="438" mass="48947">MFDLPTVAPIDMEDSWVTFQAEGEQGQDSFSSSVNLDDSLTSLQWLQEFSILNANVGKAPSSGDSHGYKHLFGAPCSPLAADPACLGMPHTPGKPISSSTSRASHLGLQPMEDIDYKTNPHVKPPYSYATLICMAMQASKKTKITLSAIYKWITDNFCYFRHADPTWQNSIRHNLSLNKCFIKVPREKDEPGKGGFWKIDPQYADRLMNGAMKKRRLPPVQIHPAFASAQAAASGNSNRGSPWQLSVNSESHQLLKEFEEATGEQGWNALGEHGWNAISDGKSHKRKQPLPKRMFKAPRLSSSPMLCQEEQTELGSLKGDFDWEVIFDSSMNGVNFSAFEDLEVTPPLSPVTRSVDLTVHGKHIDCPQQWYPLGQDQAVVQNSLDFDETFLATSFLQHPWEENRNDYLSNSANIEQLFDLNEEFPAELNDWSALGSYI</sequence>
<name>FOXJ1_XENTR</name>
<comment type="function">
    <text evidence="1">Key transcription factor required for motile ciliogenesis. Activates genes essential for motile cilia formation and function.</text>
</comment>
<comment type="subcellular location">
    <subcellularLocation>
        <location evidence="2 4">Nucleus</location>
    </subcellularLocation>
</comment>
<comment type="similarity">
    <text evidence="4">Belongs to the FOXJ1 family.</text>
</comment>
<comment type="sequence caution" evidence="4">
    <conflict type="erroneous initiation">
        <sequence resource="EMBL-CDS" id="AAH88533"/>
    </conflict>
</comment>
<comment type="sequence caution" evidence="4">
    <conflict type="erroneous initiation">
        <sequence resource="EMBL-CDS" id="CAJ82756"/>
    </conflict>
</comment>
<protein>
    <recommendedName>
        <fullName>Forkhead box protein J1</fullName>
        <shortName>FoxJ1</shortName>
    </recommendedName>
</protein>